<protein>
    <recommendedName>
        <fullName evidence="1">Fluoride-specific ion channel FluC</fullName>
    </recommendedName>
</protein>
<proteinExistence type="inferred from homology"/>
<dbReference type="EMBL" id="AP010904">
    <property type="protein sequence ID" value="BAH75200.1"/>
    <property type="molecule type" value="Genomic_DNA"/>
</dbReference>
<dbReference type="RefSeq" id="WP_015860399.1">
    <property type="nucleotide sequence ID" value="NC_012796.1"/>
</dbReference>
<dbReference type="SMR" id="C4XPM0"/>
<dbReference type="STRING" id="573370.DMR_17090"/>
<dbReference type="KEGG" id="dma:DMR_17090"/>
<dbReference type="eggNOG" id="COG0239">
    <property type="taxonomic scope" value="Bacteria"/>
</dbReference>
<dbReference type="HOGENOM" id="CLU_114342_3_0_7"/>
<dbReference type="OrthoDB" id="9806299at2"/>
<dbReference type="Proteomes" id="UP000009071">
    <property type="component" value="Chromosome"/>
</dbReference>
<dbReference type="GO" id="GO:0005886">
    <property type="term" value="C:plasma membrane"/>
    <property type="evidence" value="ECO:0007669"/>
    <property type="project" value="UniProtKB-SubCell"/>
</dbReference>
<dbReference type="GO" id="GO:0062054">
    <property type="term" value="F:fluoride channel activity"/>
    <property type="evidence" value="ECO:0007669"/>
    <property type="project" value="UniProtKB-UniRule"/>
</dbReference>
<dbReference type="GO" id="GO:0046872">
    <property type="term" value="F:metal ion binding"/>
    <property type="evidence" value="ECO:0007669"/>
    <property type="project" value="UniProtKB-KW"/>
</dbReference>
<dbReference type="GO" id="GO:0140114">
    <property type="term" value="P:cellular detoxification of fluoride"/>
    <property type="evidence" value="ECO:0007669"/>
    <property type="project" value="UniProtKB-UniRule"/>
</dbReference>
<dbReference type="HAMAP" id="MF_00454">
    <property type="entry name" value="FluC"/>
    <property type="match status" value="1"/>
</dbReference>
<dbReference type="InterPro" id="IPR003691">
    <property type="entry name" value="FluC"/>
</dbReference>
<dbReference type="PANTHER" id="PTHR28259">
    <property type="entry name" value="FLUORIDE EXPORT PROTEIN 1-RELATED"/>
    <property type="match status" value="1"/>
</dbReference>
<dbReference type="PANTHER" id="PTHR28259:SF1">
    <property type="entry name" value="FLUORIDE EXPORT PROTEIN 1-RELATED"/>
    <property type="match status" value="1"/>
</dbReference>
<dbReference type="Pfam" id="PF02537">
    <property type="entry name" value="CRCB"/>
    <property type="match status" value="1"/>
</dbReference>
<gene>
    <name evidence="1" type="primary">fluC</name>
    <name evidence="1" type="synonym">crcB</name>
    <name type="ordered locus">DMR_17090</name>
</gene>
<name>FLUC_SOLM1</name>
<accession>C4XPM0</accession>
<keyword id="KW-0997">Cell inner membrane</keyword>
<keyword id="KW-1003">Cell membrane</keyword>
<keyword id="KW-0407">Ion channel</keyword>
<keyword id="KW-0406">Ion transport</keyword>
<keyword id="KW-0472">Membrane</keyword>
<keyword id="KW-0479">Metal-binding</keyword>
<keyword id="KW-0915">Sodium</keyword>
<keyword id="KW-0812">Transmembrane</keyword>
<keyword id="KW-1133">Transmembrane helix</keyword>
<keyword id="KW-0813">Transport</keyword>
<evidence type="ECO:0000255" key="1">
    <source>
        <dbReference type="HAMAP-Rule" id="MF_00454"/>
    </source>
</evidence>
<organism>
    <name type="scientific">Solidesulfovibrio magneticus (strain ATCC 700980 / DSM 13731 / RS-1)</name>
    <name type="common">Desulfovibrio magneticus</name>
    <dbReference type="NCBI Taxonomy" id="573370"/>
    <lineage>
        <taxon>Bacteria</taxon>
        <taxon>Pseudomonadati</taxon>
        <taxon>Thermodesulfobacteriota</taxon>
        <taxon>Desulfovibrionia</taxon>
        <taxon>Desulfovibrionales</taxon>
        <taxon>Desulfovibrionaceae</taxon>
        <taxon>Solidesulfovibrio</taxon>
    </lineage>
</organism>
<reference key="1">
    <citation type="journal article" date="2009" name="Genome Res.">
        <title>Whole genome sequence of Desulfovibrio magneticus strain RS-1 revealed common gene clusters in magnetotactic bacteria.</title>
        <authorList>
            <person name="Nakazawa H."/>
            <person name="Arakaki A."/>
            <person name="Narita-Yamada S."/>
            <person name="Yashiro I."/>
            <person name="Jinno K."/>
            <person name="Aoki N."/>
            <person name="Tsuruyama A."/>
            <person name="Okamura Y."/>
            <person name="Tanikawa S."/>
            <person name="Fujita N."/>
            <person name="Takeyama H."/>
            <person name="Matsunaga T."/>
        </authorList>
    </citation>
    <scope>NUCLEOTIDE SEQUENCE [LARGE SCALE GENOMIC DNA]</scope>
    <source>
        <strain>ATCC 700980 / DSM 13731 / RS-1</strain>
    </source>
</reference>
<feature type="chain" id="PRO_1000206247" description="Fluoride-specific ion channel FluC">
    <location>
        <begin position="1"/>
        <end position="125"/>
    </location>
</feature>
<feature type="transmembrane region" description="Helical" evidence="1">
    <location>
        <begin position="6"/>
        <end position="26"/>
    </location>
</feature>
<feature type="transmembrane region" description="Helical" evidence="1">
    <location>
        <begin position="34"/>
        <end position="54"/>
    </location>
</feature>
<feature type="transmembrane region" description="Helical" evidence="1">
    <location>
        <begin position="68"/>
        <end position="88"/>
    </location>
</feature>
<feature type="transmembrane region" description="Helical" evidence="1">
    <location>
        <begin position="98"/>
        <end position="118"/>
    </location>
</feature>
<feature type="binding site" evidence="1">
    <location>
        <position position="76"/>
    </location>
    <ligand>
        <name>Na(+)</name>
        <dbReference type="ChEBI" id="CHEBI:29101"/>
        <note>structural</note>
    </ligand>
</feature>
<feature type="binding site" evidence="1">
    <location>
        <position position="79"/>
    </location>
    <ligand>
        <name>Na(+)</name>
        <dbReference type="ChEBI" id="CHEBI:29101"/>
        <note>structural</note>
    </ligand>
</feature>
<sequence length="125" mass="13499">MLEKLGFIALAGAAGTLARYWLSGLVYDVLGRDFPWGTAVVNILGCFLFGLVWEAGAERMLLRTEARAVLLTGFMGAFTTFSTFIFESGGLLEDHRYLALLANLGFQTILGFAALFAGLALGRLI</sequence>
<comment type="function">
    <text evidence="1">Fluoride-specific ion channel. Important for reducing fluoride concentration in the cell, thus reducing its toxicity.</text>
</comment>
<comment type="catalytic activity">
    <reaction evidence="1">
        <text>fluoride(in) = fluoride(out)</text>
        <dbReference type="Rhea" id="RHEA:76159"/>
        <dbReference type="ChEBI" id="CHEBI:17051"/>
    </reaction>
    <physiologicalReaction direction="left-to-right" evidence="1">
        <dbReference type="Rhea" id="RHEA:76160"/>
    </physiologicalReaction>
</comment>
<comment type="activity regulation">
    <text evidence="1">Na(+) is not transported, but it plays an essential structural role and its presence is essential for fluoride channel function.</text>
</comment>
<comment type="subcellular location">
    <subcellularLocation>
        <location evidence="1">Cell inner membrane</location>
        <topology evidence="1">Multi-pass membrane protein</topology>
    </subcellularLocation>
</comment>
<comment type="similarity">
    <text evidence="1">Belongs to the fluoride channel Fluc/FEX (TC 1.A.43) family.</text>
</comment>